<accession>Q9W751</accession>
<accession>Q9DEN6</accession>
<accession>Q9IA98</accession>
<feature type="chain" id="PRO_0000049222" description="Pituitary homeobox 1">
    <location>
        <begin position="1"/>
        <end position="305"/>
    </location>
</feature>
<feature type="DNA-binding region" description="Homeobox" evidence="4">
    <location>
        <begin position="78"/>
        <end position="137"/>
    </location>
</feature>
<feature type="region of interest" description="Disordered" evidence="6">
    <location>
        <begin position="1"/>
        <end position="92"/>
    </location>
</feature>
<feature type="region of interest" description="Interaction with PIT-1" evidence="1">
    <location>
        <begin position="138"/>
        <end position="270"/>
    </location>
</feature>
<feature type="short sequence motif" description="OAR" evidence="5">
    <location>
        <begin position="271"/>
        <end position="284"/>
    </location>
</feature>
<feature type="short sequence motif" description="Nuclear localization signal" evidence="3">
    <location>
        <begin position="284"/>
        <end position="288"/>
    </location>
</feature>
<feature type="compositionally biased region" description="Basic and acidic residues" evidence="6">
    <location>
        <begin position="53"/>
        <end position="66"/>
    </location>
</feature>
<feature type="compositionally biased region" description="Basic residues" evidence="6">
    <location>
        <begin position="74"/>
        <end position="83"/>
    </location>
</feature>
<feature type="sequence conflict" description="In Ref. 2 and 3." evidence="7" ref="2 3">
    <original>G</original>
    <variation>A</variation>
    <location>
        <position position="7"/>
    </location>
</feature>
<feature type="sequence conflict" description="In Ref. 3; CAC12834." evidence="7" ref="3">
    <original>A</original>
    <variation>V</variation>
    <location>
        <position position="54"/>
    </location>
</feature>
<organism>
    <name type="scientific">Xenopus laevis</name>
    <name type="common">African clawed frog</name>
    <dbReference type="NCBI Taxonomy" id="8355"/>
    <lineage>
        <taxon>Eukaryota</taxon>
        <taxon>Metazoa</taxon>
        <taxon>Chordata</taxon>
        <taxon>Craniata</taxon>
        <taxon>Vertebrata</taxon>
        <taxon>Euteleostomi</taxon>
        <taxon>Amphibia</taxon>
        <taxon>Batrachia</taxon>
        <taxon>Anura</taxon>
        <taxon>Pipoidea</taxon>
        <taxon>Pipidae</taxon>
        <taxon>Xenopodinae</taxon>
        <taxon>Xenopus</taxon>
        <taxon>Xenopus</taxon>
    </lineage>
</organism>
<proteinExistence type="evidence at transcript level"/>
<sequence>MDSFKGGMNLERLPESLRPQPSHDMATSFHLQRSSEARDPMDNSASESSDTEIAEKERTGEPKGEDGNGDDPSKKKKQRRQRTHFTSQQLQELEATFQRNRYPDMSMREEIAVWTNLTEARVRVWFKNRRAKWRKRERNQQMDLCKNGYVPQFSGLMQPYDEMYAGYPYNNWATKSLTPAPLSTKSFTFFNSMSPLSSQSMFSGPSSISSMSMPSSMGHSAVPGMANSSLNNINNLNNISGSSLNSAMSSTGCPYGPPGSPYTVYRDTCNSSLASLRLKSKQHSTFGYSSLQSPASSLNACQYNS</sequence>
<comment type="function">
    <text evidence="2">Sequence-specific transcription factor that binds gene promoters and activates their transcription. May play a role in the development of anterior structures, and in particular, the brain and facies and in specifying the identity or structure of hindlimb.</text>
</comment>
<comment type="subcellular location">
    <subcellularLocation>
        <location>Nucleus</location>
    </subcellularLocation>
</comment>
<comment type="developmental stage">
    <text>Expressed in the anterior neural ridge and in the cement gland Anlage during late gastrulation/early neurulation.</text>
</comment>
<comment type="similarity">
    <text evidence="7">Belongs to the paired homeobox family. Bicoid subfamily.</text>
</comment>
<evidence type="ECO:0000250" key="1"/>
<evidence type="ECO:0000250" key="2">
    <source>
        <dbReference type="UniProtKB" id="P56673"/>
    </source>
</evidence>
<evidence type="ECO:0000255" key="3"/>
<evidence type="ECO:0000255" key="4">
    <source>
        <dbReference type="PROSITE-ProRule" id="PRU00108"/>
    </source>
</evidence>
<evidence type="ECO:0000255" key="5">
    <source>
        <dbReference type="PROSITE-ProRule" id="PRU00138"/>
    </source>
</evidence>
<evidence type="ECO:0000256" key="6">
    <source>
        <dbReference type="SAM" id="MobiDB-lite"/>
    </source>
</evidence>
<evidence type="ECO:0000305" key="7"/>
<protein>
    <recommendedName>
        <fullName>Pituitary homeobox 1</fullName>
    </recommendedName>
    <alternativeName>
        <fullName>Homeobox protein PITX1</fullName>
        <shortName>X-PITX-1</shortName>
        <shortName>xPitx1</shortName>
    </alternativeName>
    <alternativeName>
        <fullName>Paired-like homeodomain transcription factor 1</fullName>
    </alternativeName>
</protein>
<reference key="1">
    <citation type="journal article" date="1999" name="Mech. Dev.">
        <title>Xpitx-1: a homeobox gene expressed during pituitary and cement gland formation of Xenopus embryos.</title>
        <authorList>
            <person name="Hollemann T."/>
            <person name="Pieler T."/>
        </authorList>
    </citation>
    <scope>NUCLEOTIDE SEQUENCE [MRNA]</scope>
</reference>
<reference key="2">
    <citation type="journal article" date="2001" name="Genesis">
        <title>xPitx1 plays a role in specifying cement gland and head during early Xenopus development.</title>
        <authorList>
            <person name="Chang W.Y."/>
            <person name="Khosrowshahian F."/>
            <person name="Chang R."/>
            <person name="Crawford M.J."/>
        </authorList>
    </citation>
    <scope>NUCLEOTIDE SEQUENCE [MRNA]</scope>
</reference>
<reference key="3">
    <citation type="journal article" date="2001" name="Genesis">
        <title>Pitx1 and Pitx2c are required for ectopic cement gland formation in Xenopus laevis.</title>
        <authorList>
            <person name="Schweickert A."/>
            <person name="Deissler K."/>
            <person name="Blum M."/>
            <person name="Steinbeisser H."/>
        </authorList>
    </citation>
    <scope>NUCLEOTIDE SEQUENCE [MRNA]</scope>
</reference>
<gene>
    <name type="primary">pitx1</name>
</gene>
<name>PITX1_XENLA</name>
<keyword id="KW-0010">Activator</keyword>
<keyword id="KW-0217">Developmental protein</keyword>
<keyword id="KW-0238">DNA-binding</keyword>
<keyword id="KW-0371">Homeobox</keyword>
<keyword id="KW-0539">Nucleus</keyword>
<keyword id="KW-1185">Reference proteome</keyword>
<keyword id="KW-0804">Transcription</keyword>
<keyword id="KW-0805">Transcription regulation</keyword>
<dbReference type="EMBL" id="AF155206">
    <property type="protein sequence ID" value="AAD45292.1"/>
    <property type="molecule type" value="mRNA"/>
</dbReference>
<dbReference type="EMBL" id="AF217647">
    <property type="protein sequence ID" value="AAF29531.1"/>
    <property type="molecule type" value="mRNA"/>
</dbReference>
<dbReference type="EMBL" id="AJ278330">
    <property type="protein sequence ID" value="CAC12834.1"/>
    <property type="molecule type" value="mRNA"/>
</dbReference>
<dbReference type="RefSeq" id="NP_001080981.1">
    <property type="nucleotide sequence ID" value="NM_001087512.1"/>
</dbReference>
<dbReference type="RefSeq" id="NP_001091900.1">
    <property type="nucleotide sequence ID" value="NM_001098430.1"/>
</dbReference>
<dbReference type="SMR" id="Q9W751"/>
<dbReference type="GeneID" id="394310"/>
<dbReference type="GeneID" id="398122"/>
<dbReference type="KEGG" id="xla:394310"/>
<dbReference type="CTD" id="394310"/>
<dbReference type="CTD" id="5307"/>
<dbReference type="OrthoDB" id="6159439at2759"/>
<dbReference type="Proteomes" id="UP000186698">
    <property type="component" value="Chromosome 3L"/>
</dbReference>
<dbReference type="Bgee" id="394310">
    <property type="expression patterns" value="Expressed in neurula embryo and 6 other cell types or tissues"/>
</dbReference>
<dbReference type="GO" id="GO:0005634">
    <property type="term" value="C:nucleus"/>
    <property type="evidence" value="ECO:0000250"/>
    <property type="project" value="UniProtKB"/>
</dbReference>
<dbReference type="GO" id="GO:0003700">
    <property type="term" value="F:DNA-binding transcription factor activity"/>
    <property type="evidence" value="ECO:0000250"/>
    <property type="project" value="UniProtKB"/>
</dbReference>
<dbReference type="GO" id="GO:0000981">
    <property type="term" value="F:DNA-binding transcription factor activity, RNA polymerase II-specific"/>
    <property type="evidence" value="ECO:0000318"/>
    <property type="project" value="GO_Central"/>
</dbReference>
<dbReference type="GO" id="GO:0000978">
    <property type="term" value="F:RNA polymerase II cis-regulatory region sequence-specific DNA binding"/>
    <property type="evidence" value="ECO:0000318"/>
    <property type="project" value="GO_Central"/>
</dbReference>
<dbReference type="GO" id="GO:0009653">
    <property type="term" value="P:anatomical structure morphogenesis"/>
    <property type="evidence" value="ECO:0000318"/>
    <property type="project" value="GO_Central"/>
</dbReference>
<dbReference type="GO" id="GO:0006357">
    <property type="term" value="P:regulation of transcription by RNA polymerase II"/>
    <property type="evidence" value="ECO:0000318"/>
    <property type="project" value="GO_Central"/>
</dbReference>
<dbReference type="CDD" id="cd00086">
    <property type="entry name" value="homeodomain"/>
    <property type="match status" value="1"/>
</dbReference>
<dbReference type="FunFam" id="1.10.10.60:FF:000031">
    <property type="entry name" value="Homeobox protein"/>
    <property type="match status" value="1"/>
</dbReference>
<dbReference type="Gene3D" id="1.10.10.60">
    <property type="entry name" value="Homeodomain-like"/>
    <property type="match status" value="1"/>
</dbReference>
<dbReference type="InterPro" id="IPR001356">
    <property type="entry name" value="HD"/>
</dbReference>
<dbReference type="InterPro" id="IPR017970">
    <property type="entry name" value="Homeobox_CS"/>
</dbReference>
<dbReference type="InterPro" id="IPR016233">
    <property type="entry name" value="Homeobox_Pitx/unc30"/>
</dbReference>
<dbReference type="InterPro" id="IPR009057">
    <property type="entry name" value="Homeodomain-like_sf"/>
</dbReference>
<dbReference type="InterPro" id="IPR003654">
    <property type="entry name" value="OAR_dom"/>
</dbReference>
<dbReference type="PANTHER" id="PTHR45882:SF1">
    <property type="entry name" value="PITUITARY HOMEOBOX 1"/>
    <property type="match status" value="1"/>
</dbReference>
<dbReference type="PANTHER" id="PTHR45882">
    <property type="entry name" value="PITUITARY HOMEOBOX HOMOLOG PTX1"/>
    <property type="match status" value="1"/>
</dbReference>
<dbReference type="Pfam" id="PF00046">
    <property type="entry name" value="Homeodomain"/>
    <property type="match status" value="1"/>
</dbReference>
<dbReference type="Pfam" id="PF03826">
    <property type="entry name" value="OAR"/>
    <property type="match status" value="1"/>
</dbReference>
<dbReference type="PIRSF" id="PIRSF000563">
    <property type="entry name" value="Homeobox_protein_Pitx/Unc30"/>
    <property type="match status" value="1"/>
</dbReference>
<dbReference type="SMART" id="SM00389">
    <property type="entry name" value="HOX"/>
    <property type="match status" value="1"/>
</dbReference>
<dbReference type="SUPFAM" id="SSF46689">
    <property type="entry name" value="Homeodomain-like"/>
    <property type="match status" value="1"/>
</dbReference>
<dbReference type="PROSITE" id="PS00027">
    <property type="entry name" value="HOMEOBOX_1"/>
    <property type="match status" value="1"/>
</dbReference>
<dbReference type="PROSITE" id="PS50071">
    <property type="entry name" value="HOMEOBOX_2"/>
    <property type="match status" value="1"/>
</dbReference>
<dbReference type="PROSITE" id="PS50803">
    <property type="entry name" value="OAR"/>
    <property type="match status" value="1"/>
</dbReference>